<proteinExistence type="inferred from homology"/>
<accession>P45997</accession>
<comment type="function">
    <text>Essential for piliation.</text>
</comment>
<comment type="subcellular location">
    <subcellularLocation>
        <location evidence="1">Cell outer membrane</location>
        <topology evidence="1">Multi-pass membrane protein</topology>
    </subcellularLocation>
</comment>
<comment type="similarity">
    <text evidence="3">Belongs to the fimbrial export usher family.</text>
</comment>
<comment type="caution">
    <text evidence="3">It is uncertain whether Met-1 or Met-97 is the initiator.</text>
</comment>
<evidence type="ECO:0000250" key="1"/>
<evidence type="ECO:0000255" key="2"/>
<evidence type="ECO:0000305" key="3"/>
<sequence length="837" mass="92641">MKTKNFPLNKIAFACTLLLANPVAWAEDQFDASLWGGGSVLGIDFARFNVKNAVLPGRYEAQIYVNNEEKGESDIIFADNPATGRAELCFTPKLQEMLDLMDEAIVKSPNAEDDTCVFASEAIPKGTFDYQGGDMKLKLELPQALTIRRPRGYIAPSRWQTGTNAASANYDINYYRSGNPEVKSKSLYVGLRGGVNLGNWALRHNGSFSRFENHSSSGFTDKGKNHYERGDTYLQRDFALLRGNVTVGDFFSTARIGESFGLRGLRIASDDRMLAPSQRGFAPVVRGVANTNAKVSIKQNGYTIYQITVPAGPFVINDLYASGYSGDLTVEIQESDGKVRSFIVPFSNLAPLMRVGHLRYQLAGGRYRIDSRTFDERVLQGVLQYGLTNHLTLNSSLLYTRHYRAGLFGFGLNTPIGAFSADATWSHAEFPLKKVSKNGYSLHGSYSINFNEIGTNLTLAAYRYSSRDFYTLSDTIGLNRTFKQFSGAYLPEIYRPKNQFQVSLSQSLGNWGNLYLSGQTYNYWEKRGTNTQYQLAYANRFHILNYSINLSQSIDKETGKRDNSIYLSLSLPLGDNHSADSSYSRSGNDINQRLGVNGSFGERHQWSYGINASRNNQGYRSYDANLAHNNSIGSYRASYSRDSLKNRSTSLGASGAVVAHKYGITLSQPVGESFAIIHAKDAAGAKVESGANVSLDYFGNAVVPYTSPYEINYIGINPSDAEANVEFEATERQIIPRANSISLVDFRTGKNTMVLFNLTLPNGEPVPMASTAQDSEGAFVGDVVQGGVLFANKLTQPKGELIVKWGERESEQCRFHYQVDLDNAQIQNHDIQCKTAE</sequence>
<protein>
    <recommendedName>
        <fullName>Outer membrane usher protein HifC</fullName>
    </recommendedName>
</protein>
<name>HIFC2_HAEIF</name>
<organism>
    <name type="scientific">Haemophilus influenzae</name>
    <dbReference type="NCBI Taxonomy" id="727"/>
    <lineage>
        <taxon>Bacteria</taxon>
        <taxon>Pseudomonadati</taxon>
        <taxon>Pseudomonadota</taxon>
        <taxon>Gammaproteobacteria</taxon>
        <taxon>Pasteurellales</taxon>
        <taxon>Pasteurellaceae</taxon>
        <taxon>Haemophilus</taxon>
    </lineage>
</organism>
<reference key="1">
    <citation type="journal article" date="1994" name="Mol. Microbiol.">
        <title>The fimbrial gene cluster of Haemophilus influenzae type b.</title>
        <authorList>
            <person name="van Ham M.S."/>
            <person name="van Alphen L."/>
            <person name="Mooi F.R."/>
            <person name="van Putten J.P.M."/>
        </authorList>
    </citation>
    <scope>NUCLEOTIDE SEQUENCE [GENOMIC DNA]</scope>
    <source>
        <strain>AM30 (770235) / Serotype B</strain>
    </source>
</reference>
<dbReference type="EMBL" id="Z33502">
    <property type="protein sequence ID" value="CAA83902.1"/>
    <property type="molecule type" value="Genomic_DNA"/>
</dbReference>
<dbReference type="PIR" id="S54429">
    <property type="entry name" value="S54429"/>
</dbReference>
<dbReference type="RefSeq" id="WP_077643805.1">
    <property type="nucleotide sequence ID" value="NZ_CP082856.1"/>
</dbReference>
<dbReference type="SMR" id="P45997"/>
<dbReference type="GO" id="GO:0009279">
    <property type="term" value="C:cell outer membrane"/>
    <property type="evidence" value="ECO:0007669"/>
    <property type="project" value="UniProtKB-SubCell"/>
</dbReference>
<dbReference type="GO" id="GO:0015473">
    <property type="term" value="F:fimbrial usher porin activity"/>
    <property type="evidence" value="ECO:0007669"/>
    <property type="project" value="InterPro"/>
</dbReference>
<dbReference type="GO" id="GO:0009297">
    <property type="term" value="P:pilus assembly"/>
    <property type="evidence" value="ECO:0007669"/>
    <property type="project" value="InterPro"/>
</dbReference>
<dbReference type="FunFam" id="2.60.40.3110:FF:000001">
    <property type="entry name" value="Putative fimbrial outer membrane usher"/>
    <property type="match status" value="1"/>
</dbReference>
<dbReference type="Gene3D" id="2.60.40.2070">
    <property type="match status" value="1"/>
</dbReference>
<dbReference type="Gene3D" id="2.60.40.3110">
    <property type="match status" value="1"/>
</dbReference>
<dbReference type="Gene3D" id="3.10.20.410">
    <property type="match status" value="1"/>
</dbReference>
<dbReference type="Gene3D" id="2.60.40.2610">
    <property type="entry name" value="Outer membrane usher protein FimD, plug domain"/>
    <property type="match status" value="1"/>
</dbReference>
<dbReference type="InterPro" id="IPR000015">
    <property type="entry name" value="Fimb_usher"/>
</dbReference>
<dbReference type="InterPro" id="IPR018030">
    <property type="entry name" value="Fimbrial_membr_usher_CS"/>
</dbReference>
<dbReference type="InterPro" id="IPR042186">
    <property type="entry name" value="FimD_plug_dom"/>
</dbReference>
<dbReference type="InterPro" id="IPR025949">
    <property type="entry name" value="PapC-like_C"/>
</dbReference>
<dbReference type="InterPro" id="IPR043142">
    <property type="entry name" value="PapC-like_C_sf"/>
</dbReference>
<dbReference type="InterPro" id="IPR025885">
    <property type="entry name" value="PapC_N"/>
</dbReference>
<dbReference type="InterPro" id="IPR037224">
    <property type="entry name" value="PapC_N_sf"/>
</dbReference>
<dbReference type="PANTHER" id="PTHR30451">
    <property type="entry name" value="OUTER MEMBRANE USHER PROTEIN"/>
    <property type="match status" value="1"/>
</dbReference>
<dbReference type="PANTHER" id="PTHR30451:SF5">
    <property type="entry name" value="SLR0019 PROTEIN"/>
    <property type="match status" value="1"/>
</dbReference>
<dbReference type="Pfam" id="PF13953">
    <property type="entry name" value="PapC_C"/>
    <property type="match status" value="1"/>
</dbReference>
<dbReference type="Pfam" id="PF13954">
    <property type="entry name" value="PapC_N"/>
    <property type="match status" value="1"/>
</dbReference>
<dbReference type="Pfam" id="PF00577">
    <property type="entry name" value="Usher"/>
    <property type="match status" value="1"/>
</dbReference>
<dbReference type="SUPFAM" id="SSF141729">
    <property type="entry name" value="FimD N-terminal domain-like"/>
    <property type="match status" value="1"/>
</dbReference>
<dbReference type="PROSITE" id="PS01151">
    <property type="entry name" value="FIMBRIAL_USHER"/>
    <property type="match status" value="1"/>
</dbReference>
<keyword id="KW-0998">Cell outer membrane</keyword>
<keyword id="KW-1015">Disulfide bond</keyword>
<keyword id="KW-1029">Fimbrium biogenesis</keyword>
<keyword id="KW-0472">Membrane</keyword>
<keyword id="KW-0732">Signal</keyword>
<keyword id="KW-0812">Transmembrane</keyword>
<keyword id="KW-1134">Transmembrane beta strand</keyword>
<keyword id="KW-0813">Transport</keyword>
<gene>
    <name type="primary">hifC</name>
</gene>
<feature type="signal peptide" evidence="2">
    <location>
        <begin position="1"/>
        <end position="26"/>
    </location>
</feature>
<feature type="chain" id="PRO_0000009317" description="Outer membrane usher protein HifC">
    <location>
        <begin position="27"/>
        <end position="837"/>
    </location>
</feature>
<feature type="disulfide bond" evidence="2">
    <location>
        <begin position="813"/>
        <end position="833"/>
    </location>
</feature>